<evidence type="ECO:0000255" key="1">
    <source>
        <dbReference type="HAMAP-Rule" id="MF_00323"/>
    </source>
</evidence>
<evidence type="ECO:0000305" key="2"/>
<comment type="function">
    <text evidence="1">Involved in coproporphyrin-dependent heme b biosynthesis. Catalyzes the insertion of ferrous iron into coproporphyrin III to form Fe-coproporphyrin III.</text>
</comment>
<comment type="catalytic activity">
    <reaction evidence="1">
        <text>Fe-coproporphyrin III + 2 H(+) = coproporphyrin III + Fe(2+)</text>
        <dbReference type="Rhea" id="RHEA:49572"/>
        <dbReference type="ChEBI" id="CHEBI:15378"/>
        <dbReference type="ChEBI" id="CHEBI:29033"/>
        <dbReference type="ChEBI" id="CHEBI:68438"/>
        <dbReference type="ChEBI" id="CHEBI:131725"/>
        <dbReference type="EC" id="4.99.1.9"/>
    </reaction>
    <physiologicalReaction direction="right-to-left" evidence="1">
        <dbReference type="Rhea" id="RHEA:49574"/>
    </physiologicalReaction>
</comment>
<comment type="pathway">
    <text evidence="1">Porphyrin-containing compound metabolism; protoheme biosynthesis.</text>
</comment>
<comment type="subcellular location">
    <subcellularLocation>
        <location evidence="1">Cytoplasm</location>
    </subcellularLocation>
</comment>
<comment type="similarity">
    <text evidence="1 2">Belongs to the ferrochelatase family.</text>
</comment>
<reference key="1">
    <citation type="journal article" date="2003" name="Nature">
        <title>Genome sequence of Bacillus cereus and comparative analysis with Bacillus anthracis.</title>
        <authorList>
            <person name="Ivanova N."/>
            <person name="Sorokin A."/>
            <person name="Anderson I."/>
            <person name="Galleron N."/>
            <person name="Candelon B."/>
            <person name="Kapatral V."/>
            <person name="Bhattacharyya A."/>
            <person name="Reznik G."/>
            <person name="Mikhailova N."/>
            <person name="Lapidus A."/>
            <person name="Chu L."/>
            <person name="Mazur M."/>
            <person name="Goltsman E."/>
            <person name="Larsen N."/>
            <person name="D'Souza M."/>
            <person name="Walunas T."/>
            <person name="Grechkin Y."/>
            <person name="Pusch G."/>
            <person name="Haselkorn R."/>
            <person name="Fonstein M."/>
            <person name="Ehrlich S.D."/>
            <person name="Overbeek R."/>
            <person name="Kyrpides N.C."/>
        </authorList>
    </citation>
    <scope>NUCLEOTIDE SEQUENCE [LARGE SCALE GENOMIC DNA]</scope>
    <source>
        <strain>ATCC 14579 / DSM 31 / CCUG 7414 / JCM 2152 / NBRC 15305 / NCIMB 9373 / NCTC 2599 / NRRL B-3711</strain>
    </source>
</reference>
<sequence length="319" mass="36230">MKKKKIGLLVMAYGTPESLDDVEAYYTHIRHGRKPSEEALEDLIGRYKAIGGISPLAKITKEQAHKLTDSMNNIFTEYEFTCYLGLKHTAPFIEDAVEEMKRNGIEQTISIVLAPHYSTFSIKAYNDRAIRLSKEIGGPVIESIEQWYDEPKFISYWADQIKETFTEIDDKEKAVVIFSAHSLPEKIIAAGDPYVEQLKHTADLIAEAANIQNYTIGWQSAGNTPDPWIGPDVQDLTKDLYEEHGYESFIYCPVGFVAEHLEVLYDNDYECKVVTDELNAKYFRPNMPNAQSAFIDCLAEIVSKKVKEIVDKDLVLNNN</sequence>
<proteinExistence type="inferred from homology"/>
<dbReference type="EC" id="4.99.1.9" evidence="1"/>
<dbReference type="EMBL" id="AE016877">
    <property type="protein sequence ID" value="AAP08141.1"/>
    <property type="molecule type" value="Genomic_DNA"/>
</dbReference>
<dbReference type="RefSeq" id="NP_830940.1">
    <property type="nucleotide sequence ID" value="NC_004722.1"/>
</dbReference>
<dbReference type="RefSeq" id="WP_000727378.1">
    <property type="nucleotide sequence ID" value="NC_004722.1"/>
</dbReference>
<dbReference type="SMR" id="Q81GN7"/>
<dbReference type="STRING" id="226900.BC_1154"/>
<dbReference type="KEGG" id="bce:BC1154"/>
<dbReference type="PATRIC" id="fig|226900.8.peg.1118"/>
<dbReference type="HOGENOM" id="CLU_018884_2_1_9"/>
<dbReference type="OrthoDB" id="9776380at2"/>
<dbReference type="UniPathway" id="UPA00252"/>
<dbReference type="Proteomes" id="UP000001417">
    <property type="component" value="Chromosome"/>
</dbReference>
<dbReference type="GO" id="GO:0005737">
    <property type="term" value="C:cytoplasm"/>
    <property type="evidence" value="ECO:0007669"/>
    <property type="project" value="UniProtKB-SubCell"/>
</dbReference>
<dbReference type="GO" id="GO:0004325">
    <property type="term" value="F:ferrochelatase activity"/>
    <property type="evidence" value="ECO:0000318"/>
    <property type="project" value="GO_Central"/>
</dbReference>
<dbReference type="GO" id="GO:0046872">
    <property type="term" value="F:metal ion binding"/>
    <property type="evidence" value="ECO:0007669"/>
    <property type="project" value="UniProtKB-KW"/>
</dbReference>
<dbReference type="GO" id="GO:0006783">
    <property type="term" value="P:heme biosynthetic process"/>
    <property type="evidence" value="ECO:0000318"/>
    <property type="project" value="GO_Central"/>
</dbReference>
<dbReference type="CDD" id="cd00419">
    <property type="entry name" value="Ferrochelatase_C"/>
    <property type="match status" value="1"/>
</dbReference>
<dbReference type="CDD" id="cd03411">
    <property type="entry name" value="Ferrochelatase_N"/>
    <property type="match status" value="1"/>
</dbReference>
<dbReference type="FunFam" id="3.40.50.1400:FF:000009">
    <property type="entry name" value="Ferrochelatase"/>
    <property type="match status" value="1"/>
</dbReference>
<dbReference type="Gene3D" id="3.40.50.1400">
    <property type="match status" value="2"/>
</dbReference>
<dbReference type="HAMAP" id="MF_00323">
    <property type="entry name" value="Ferrochelatase"/>
    <property type="match status" value="1"/>
</dbReference>
<dbReference type="InterPro" id="IPR001015">
    <property type="entry name" value="Ferrochelatase"/>
</dbReference>
<dbReference type="InterPro" id="IPR019772">
    <property type="entry name" value="Ferrochelatase_AS"/>
</dbReference>
<dbReference type="InterPro" id="IPR033644">
    <property type="entry name" value="Ferrochelatase_C"/>
</dbReference>
<dbReference type="InterPro" id="IPR033659">
    <property type="entry name" value="Ferrochelatase_N"/>
</dbReference>
<dbReference type="NCBIfam" id="TIGR00109">
    <property type="entry name" value="hemH"/>
    <property type="match status" value="1"/>
</dbReference>
<dbReference type="NCBIfam" id="NF009095">
    <property type="entry name" value="PRK12435.1"/>
    <property type="match status" value="1"/>
</dbReference>
<dbReference type="PANTHER" id="PTHR11108">
    <property type="entry name" value="FERROCHELATASE"/>
    <property type="match status" value="1"/>
</dbReference>
<dbReference type="PANTHER" id="PTHR11108:SF1">
    <property type="entry name" value="FERROCHELATASE, MITOCHONDRIAL"/>
    <property type="match status" value="1"/>
</dbReference>
<dbReference type="Pfam" id="PF00762">
    <property type="entry name" value="Ferrochelatase"/>
    <property type="match status" value="1"/>
</dbReference>
<dbReference type="SUPFAM" id="SSF53800">
    <property type="entry name" value="Chelatase"/>
    <property type="match status" value="1"/>
</dbReference>
<dbReference type="PROSITE" id="PS00534">
    <property type="entry name" value="FERROCHELATASE"/>
    <property type="match status" value="1"/>
</dbReference>
<keyword id="KW-0963">Cytoplasm</keyword>
<keyword id="KW-0350">Heme biosynthesis</keyword>
<keyword id="KW-0408">Iron</keyword>
<keyword id="KW-0456">Lyase</keyword>
<keyword id="KW-0479">Metal-binding</keyword>
<keyword id="KW-0627">Porphyrin biosynthesis</keyword>
<keyword id="KW-1185">Reference proteome</keyword>
<name>CPFC2_BACCR</name>
<organism>
    <name type="scientific">Bacillus cereus (strain ATCC 14579 / DSM 31 / CCUG 7414 / JCM 2152 / NBRC 15305 / NCIMB 9373 / NCTC 2599 / NRRL B-3711)</name>
    <dbReference type="NCBI Taxonomy" id="226900"/>
    <lineage>
        <taxon>Bacteria</taxon>
        <taxon>Bacillati</taxon>
        <taxon>Bacillota</taxon>
        <taxon>Bacilli</taxon>
        <taxon>Bacillales</taxon>
        <taxon>Bacillaceae</taxon>
        <taxon>Bacillus</taxon>
        <taxon>Bacillus cereus group</taxon>
    </lineage>
</organism>
<accession>Q81GN7</accession>
<gene>
    <name evidence="1" type="primary">cpfC2</name>
    <name type="synonym">hemH2</name>
    <name type="ordered locus">BC_1154</name>
</gene>
<protein>
    <recommendedName>
        <fullName evidence="1">Coproporphyrin III ferrochelatase 2</fullName>
        <ecNumber evidence="1">4.99.1.9</ecNumber>
    </recommendedName>
</protein>
<feature type="chain" id="PRO_0000175107" description="Coproporphyrin III ferrochelatase 2">
    <location>
        <begin position="1"/>
        <end position="319"/>
    </location>
</feature>
<feature type="binding site" description="axial binding residue" evidence="1">
    <location>
        <position position="13"/>
    </location>
    <ligand>
        <name>Fe-coproporphyrin III</name>
        <dbReference type="ChEBI" id="CHEBI:68438"/>
    </ligand>
    <ligandPart>
        <name>Fe</name>
        <dbReference type="ChEBI" id="CHEBI:18248"/>
    </ligandPart>
</feature>
<feature type="binding site" evidence="1">
    <location>
        <position position="30"/>
    </location>
    <ligand>
        <name>Fe-coproporphyrin III</name>
        <dbReference type="ChEBI" id="CHEBI:68438"/>
    </ligand>
</feature>
<feature type="binding site" evidence="1">
    <location>
        <begin position="46"/>
        <end position="47"/>
    </location>
    <ligand>
        <name>Fe-coproporphyrin III</name>
        <dbReference type="ChEBI" id="CHEBI:68438"/>
    </ligand>
</feature>
<feature type="binding site" evidence="1">
    <location>
        <position position="54"/>
    </location>
    <ligand>
        <name>Fe-coproporphyrin III</name>
        <dbReference type="ChEBI" id="CHEBI:68438"/>
    </ligand>
</feature>
<feature type="binding site" evidence="1">
    <location>
        <position position="125"/>
    </location>
    <ligand>
        <name>Fe-coproporphyrin III</name>
        <dbReference type="ChEBI" id="CHEBI:68438"/>
    </ligand>
</feature>
<feature type="binding site" evidence="1">
    <location>
        <position position="181"/>
    </location>
    <ligand>
        <name>Fe(2+)</name>
        <dbReference type="ChEBI" id="CHEBI:29033"/>
    </ligand>
</feature>
<feature type="binding site" evidence="1">
    <location>
        <position position="262"/>
    </location>
    <ligand>
        <name>Fe(2+)</name>
        <dbReference type="ChEBI" id="CHEBI:29033"/>
    </ligand>
</feature>